<dbReference type="EC" id="2.3.1.129" evidence="1"/>
<dbReference type="EMBL" id="BX571861">
    <property type="protein sequence ID" value="CAE12979.1"/>
    <property type="molecule type" value="Genomic_DNA"/>
</dbReference>
<dbReference type="RefSeq" id="WP_011145060.1">
    <property type="nucleotide sequence ID" value="NC_005126.1"/>
</dbReference>
<dbReference type="SMR" id="Q7N8N5"/>
<dbReference type="STRING" id="243265.plu0684"/>
<dbReference type="GeneID" id="48846973"/>
<dbReference type="KEGG" id="plu:plu0684"/>
<dbReference type="eggNOG" id="COG1043">
    <property type="taxonomic scope" value="Bacteria"/>
</dbReference>
<dbReference type="HOGENOM" id="CLU_061249_0_0_6"/>
<dbReference type="OrthoDB" id="9807278at2"/>
<dbReference type="UniPathway" id="UPA00359">
    <property type="reaction ID" value="UER00477"/>
</dbReference>
<dbReference type="Proteomes" id="UP000002514">
    <property type="component" value="Chromosome"/>
</dbReference>
<dbReference type="GO" id="GO:0005737">
    <property type="term" value="C:cytoplasm"/>
    <property type="evidence" value="ECO:0007669"/>
    <property type="project" value="UniProtKB-SubCell"/>
</dbReference>
<dbReference type="GO" id="GO:0016020">
    <property type="term" value="C:membrane"/>
    <property type="evidence" value="ECO:0007669"/>
    <property type="project" value="GOC"/>
</dbReference>
<dbReference type="GO" id="GO:0008780">
    <property type="term" value="F:acyl-[acyl-carrier-protein]-UDP-N-acetylglucosamine O-acyltransferase activity"/>
    <property type="evidence" value="ECO:0007669"/>
    <property type="project" value="UniProtKB-UniRule"/>
</dbReference>
<dbReference type="GO" id="GO:0009245">
    <property type="term" value="P:lipid A biosynthetic process"/>
    <property type="evidence" value="ECO:0007669"/>
    <property type="project" value="UniProtKB-UniRule"/>
</dbReference>
<dbReference type="CDD" id="cd03351">
    <property type="entry name" value="LbH_UDP-GlcNAc_AT"/>
    <property type="match status" value="1"/>
</dbReference>
<dbReference type="FunFam" id="2.160.10.10:FF:000003">
    <property type="entry name" value="Acyl-[acyl-carrier-protein]--UDP-N-acetylglucosamine O-acyltransferase"/>
    <property type="match status" value="1"/>
</dbReference>
<dbReference type="Gene3D" id="2.160.10.10">
    <property type="entry name" value="Hexapeptide repeat proteins"/>
    <property type="match status" value="1"/>
</dbReference>
<dbReference type="Gene3D" id="1.20.1180.10">
    <property type="entry name" value="Udp N-acetylglucosamine O-acyltransferase, C-terminal domain"/>
    <property type="match status" value="1"/>
</dbReference>
<dbReference type="HAMAP" id="MF_00387">
    <property type="entry name" value="LpxA"/>
    <property type="match status" value="1"/>
</dbReference>
<dbReference type="InterPro" id="IPR029098">
    <property type="entry name" value="Acetyltransf_C"/>
</dbReference>
<dbReference type="InterPro" id="IPR037157">
    <property type="entry name" value="Acetyltransf_C_sf"/>
</dbReference>
<dbReference type="InterPro" id="IPR001451">
    <property type="entry name" value="Hexapep"/>
</dbReference>
<dbReference type="InterPro" id="IPR018357">
    <property type="entry name" value="Hexapep_transf_CS"/>
</dbReference>
<dbReference type="InterPro" id="IPR010137">
    <property type="entry name" value="Lipid_A_LpxA"/>
</dbReference>
<dbReference type="InterPro" id="IPR011004">
    <property type="entry name" value="Trimer_LpxA-like_sf"/>
</dbReference>
<dbReference type="NCBIfam" id="TIGR01852">
    <property type="entry name" value="lipid_A_lpxA"/>
    <property type="match status" value="1"/>
</dbReference>
<dbReference type="NCBIfam" id="NF003657">
    <property type="entry name" value="PRK05289.1"/>
    <property type="match status" value="1"/>
</dbReference>
<dbReference type="PANTHER" id="PTHR43480">
    <property type="entry name" value="ACYL-[ACYL-CARRIER-PROTEIN]--UDP-N-ACETYLGLUCOSAMINE O-ACYLTRANSFERASE"/>
    <property type="match status" value="1"/>
</dbReference>
<dbReference type="PANTHER" id="PTHR43480:SF1">
    <property type="entry name" value="ACYL-[ACYL-CARRIER-PROTEIN]--UDP-N-ACETYLGLUCOSAMINE O-ACYLTRANSFERASE, MITOCHONDRIAL-RELATED"/>
    <property type="match status" value="1"/>
</dbReference>
<dbReference type="Pfam" id="PF13720">
    <property type="entry name" value="Acetyltransf_11"/>
    <property type="match status" value="1"/>
</dbReference>
<dbReference type="Pfam" id="PF00132">
    <property type="entry name" value="Hexapep"/>
    <property type="match status" value="2"/>
</dbReference>
<dbReference type="PIRSF" id="PIRSF000456">
    <property type="entry name" value="UDP-GlcNAc_acltr"/>
    <property type="match status" value="1"/>
</dbReference>
<dbReference type="SUPFAM" id="SSF51161">
    <property type="entry name" value="Trimeric LpxA-like enzymes"/>
    <property type="match status" value="1"/>
</dbReference>
<dbReference type="PROSITE" id="PS00101">
    <property type="entry name" value="HEXAPEP_TRANSFERASES"/>
    <property type="match status" value="2"/>
</dbReference>
<gene>
    <name evidence="1" type="primary">lpxA</name>
    <name type="ordered locus">plu0684</name>
</gene>
<proteinExistence type="inferred from homology"/>
<organism>
    <name type="scientific">Photorhabdus laumondii subsp. laumondii (strain DSM 15139 / CIP 105565 / TT01)</name>
    <name type="common">Photorhabdus luminescens subsp. laumondii</name>
    <dbReference type="NCBI Taxonomy" id="243265"/>
    <lineage>
        <taxon>Bacteria</taxon>
        <taxon>Pseudomonadati</taxon>
        <taxon>Pseudomonadota</taxon>
        <taxon>Gammaproteobacteria</taxon>
        <taxon>Enterobacterales</taxon>
        <taxon>Morganellaceae</taxon>
        <taxon>Photorhabdus</taxon>
    </lineage>
</organism>
<protein>
    <recommendedName>
        <fullName evidence="1">Acyl-[acyl-carrier-protein]--UDP-N-acetylglucosamine O-acyltransferase</fullName>
        <shortName evidence="1">UDP-N-acetylglucosamine acyltransferase</shortName>
        <ecNumber evidence="1">2.3.1.129</ecNumber>
    </recommendedName>
</protein>
<sequence length="262" mass="28299">MIDETAYIHPSAIVEDGAVIGANVRIGPFCCIGSQVEIGEGTELKSHVVVNGITKIGRDNQIFQFASIGEMNQDLKYHGEPTRVEIGDRNRIRESVTIHRGTVQGGGVTKIGNDNLLMVNAHIAHDCIVGDRCVIANNGTLGGHVILGDYVIIGGMSAIHQFCQIGSHAMVGGCSGVVQDIPPYVIAQGNHATPFGTNVEGLKRRGFDKDSLNVIRNAYKILYRNGKTLEEAQQEIAELAENNQHVKIFSDFLANSTRGIVR</sequence>
<name>LPXA_PHOLL</name>
<reference key="1">
    <citation type="journal article" date="2003" name="Nat. Biotechnol.">
        <title>The genome sequence of the entomopathogenic bacterium Photorhabdus luminescens.</title>
        <authorList>
            <person name="Duchaud E."/>
            <person name="Rusniok C."/>
            <person name="Frangeul L."/>
            <person name="Buchrieser C."/>
            <person name="Givaudan A."/>
            <person name="Taourit S."/>
            <person name="Bocs S."/>
            <person name="Boursaux-Eude C."/>
            <person name="Chandler M."/>
            <person name="Charles J.-F."/>
            <person name="Dassa E."/>
            <person name="Derose R."/>
            <person name="Derzelle S."/>
            <person name="Freyssinet G."/>
            <person name="Gaudriault S."/>
            <person name="Medigue C."/>
            <person name="Lanois A."/>
            <person name="Powell K."/>
            <person name="Siguier P."/>
            <person name="Vincent R."/>
            <person name="Wingate V."/>
            <person name="Zouine M."/>
            <person name="Glaser P."/>
            <person name="Boemare N."/>
            <person name="Danchin A."/>
            <person name="Kunst F."/>
        </authorList>
    </citation>
    <scope>NUCLEOTIDE SEQUENCE [LARGE SCALE GENOMIC DNA]</scope>
    <source>
        <strain>DSM 15139 / CIP 105565 / TT01</strain>
    </source>
</reference>
<comment type="function">
    <text evidence="1">Involved in the biosynthesis of lipid A, a phosphorylated glycolipid that anchors the lipopolysaccharide to the outer membrane of the cell.</text>
</comment>
<comment type="catalytic activity">
    <reaction evidence="1">
        <text>a (3R)-hydroxyacyl-[ACP] + UDP-N-acetyl-alpha-D-glucosamine = a UDP-3-O-[(3R)-3-hydroxyacyl]-N-acetyl-alpha-D-glucosamine + holo-[ACP]</text>
        <dbReference type="Rhea" id="RHEA:67812"/>
        <dbReference type="Rhea" id="RHEA-COMP:9685"/>
        <dbReference type="Rhea" id="RHEA-COMP:9945"/>
        <dbReference type="ChEBI" id="CHEBI:57705"/>
        <dbReference type="ChEBI" id="CHEBI:64479"/>
        <dbReference type="ChEBI" id="CHEBI:78827"/>
        <dbReference type="ChEBI" id="CHEBI:173225"/>
        <dbReference type="EC" id="2.3.1.129"/>
    </reaction>
</comment>
<comment type="pathway">
    <text evidence="1">Glycolipid biosynthesis; lipid IV(A) biosynthesis; lipid IV(A) from (3R)-3-hydroxytetradecanoyl-[acyl-carrier-protein] and UDP-N-acetyl-alpha-D-glucosamine: step 1/6.</text>
</comment>
<comment type="subunit">
    <text evidence="1">Homotrimer.</text>
</comment>
<comment type="subcellular location">
    <subcellularLocation>
        <location evidence="1">Cytoplasm</location>
    </subcellularLocation>
</comment>
<comment type="similarity">
    <text evidence="1">Belongs to the transferase hexapeptide repeat family. LpxA subfamily.</text>
</comment>
<feature type="chain" id="PRO_0000302584" description="Acyl-[acyl-carrier-protein]--UDP-N-acetylglucosamine O-acyltransferase">
    <location>
        <begin position="1"/>
        <end position="262"/>
    </location>
</feature>
<keyword id="KW-0012">Acyltransferase</keyword>
<keyword id="KW-0963">Cytoplasm</keyword>
<keyword id="KW-0441">Lipid A biosynthesis</keyword>
<keyword id="KW-0444">Lipid biosynthesis</keyword>
<keyword id="KW-0443">Lipid metabolism</keyword>
<keyword id="KW-1185">Reference proteome</keyword>
<keyword id="KW-0677">Repeat</keyword>
<keyword id="KW-0808">Transferase</keyword>
<accession>Q7N8N5</accession>
<evidence type="ECO:0000255" key="1">
    <source>
        <dbReference type="HAMAP-Rule" id="MF_00387"/>
    </source>
</evidence>